<accession>Q7W3H8</accession>
<feature type="chain" id="PRO_0000105280" description="Aspartyl/glutamyl-tRNA(Asn/Gln) amidotransferase subunit C">
    <location>
        <begin position="1"/>
        <end position="102"/>
    </location>
</feature>
<gene>
    <name evidence="1" type="primary">gatC</name>
    <name type="ordered locus">BPP4057</name>
</gene>
<reference key="1">
    <citation type="journal article" date="2003" name="Nat. Genet.">
        <title>Comparative analysis of the genome sequences of Bordetella pertussis, Bordetella parapertussis and Bordetella bronchiseptica.</title>
        <authorList>
            <person name="Parkhill J."/>
            <person name="Sebaihia M."/>
            <person name="Preston A."/>
            <person name="Murphy L.D."/>
            <person name="Thomson N.R."/>
            <person name="Harris D.E."/>
            <person name="Holden M.T.G."/>
            <person name="Churcher C.M."/>
            <person name="Bentley S.D."/>
            <person name="Mungall K.L."/>
            <person name="Cerdeno-Tarraga A.-M."/>
            <person name="Temple L."/>
            <person name="James K.D."/>
            <person name="Harris B."/>
            <person name="Quail M.A."/>
            <person name="Achtman M."/>
            <person name="Atkin R."/>
            <person name="Baker S."/>
            <person name="Basham D."/>
            <person name="Bason N."/>
            <person name="Cherevach I."/>
            <person name="Chillingworth T."/>
            <person name="Collins M."/>
            <person name="Cronin A."/>
            <person name="Davis P."/>
            <person name="Doggett J."/>
            <person name="Feltwell T."/>
            <person name="Goble A."/>
            <person name="Hamlin N."/>
            <person name="Hauser H."/>
            <person name="Holroyd S."/>
            <person name="Jagels K."/>
            <person name="Leather S."/>
            <person name="Moule S."/>
            <person name="Norberczak H."/>
            <person name="O'Neil S."/>
            <person name="Ormond D."/>
            <person name="Price C."/>
            <person name="Rabbinowitsch E."/>
            <person name="Rutter S."/>
            <person name="Sanders M."/>
            <person name="Saunders D."/>
            <person name="Seeger K."/>
            <person name="Sharp S."/>
            <person name="Simmonds M."/>
            <person name="Skelton J."/>
            <person name="Squares R."/>
            <person name="Squares S."/>
            <person name="Stevens K."/>
            <person name="Unwin L."/>
            <person name="Whitehead S."/>
            <person name="Barrell B.G."/>
            <person name="Maskell D.J."/>
        </authorList>
    </citation>
    <scope>NUCLEOTIDE SEQUENCE [LARGE SCALE GENOMIC DNA]</scope>
    <source>
        <strain>12822 / ATCC BAA-587 / NCTC 13253</strain>
    </source>
</reference>
<keyword id="KW-0067">ATP-binding</keyword>
<keyword id="KW-0436">Ligase</keyword>
<keyword id="KW-0547">Nucleotide-binding</keyword>
<keyword id="KW-0648">Protein biosynthesis</keyword>
<name>GATC_BORPA</name>
<sequence>MALNEQDVARIARLALIELPPDQRGRAQAELNGILHLIERLQAVDTQGVEPLAHPLSAHEDITLRLREDAVSEQATEARRAELLANAPESADGLFLVPKVIE</sequence>
<evidence type="ECO:0000255" key="1">
    <source>
        <dbReference type="HAMAP-Rule" id="MF_00122"/>
    </source>
</evidence>
<evidence type="ECO:0000305" key="2"/>
<organism>
    <name type="scientific">Bordetella parapertussis (strain 12822 / ATCC BAA-587 / NCTC 13253)</name>
    <dbReference type="NCBI Taxonomy" id="257311"/>
    <lineage>
        <taxon>Bacteria</taxon>
        <taxon>Pseudomonadati</taxon>
        <taxon>Pseudomonadota</taxon>
        <taxon>Betaproteobacteria</taxon>
        <taxon>Burkholderiales</taxon>
        <taxon>Alcaligenaceae</taxon>
        <taxon>Bordetella</taxon>
    </lineage>
</organism>
<proteinExistence type="inferred from homology"/>
<protein>
    <recommendedName>
        <fullName evidence="1">Aspartyl/glutamyl-tRNA(Asn/Gln) amidotransferase subunit C</fullName>
        <shortName evidence="1">Asp/Glu-ADT subunit C</shortName>
        <ecNumber evidence="1">6.3.5.-</ecNumber>
    </recommendedName>
</protein>
<dbReference type="EC" id="6.3.5.-" evidence="1"/>
<dbReference type="EMBL" id="BX640435">
    <property type="protein sequence ID" value="CAE39340.1"/>
    <property type="status" value="ALT_INIT"/>
    <property type="molecule type" value="Genomic_DNA"/>
</dbReference>
<dbReference type="RefSeq" id="WP_010929366.1">
    <property type="nucleotide sequence ID" value="NC_002928.3"/>
</dbReference>
<dbReference type="SMR" id="Q7W3H8"/>
<dbReference type="GeneID" id="93205856"/>
<dbReference type="KEGG" id="bpa:BPP4057"/>
<dbReference type="HOGENOM" id="CLU_105899_2_2_4"/>
<dbReference type="Proteomes" id="UP000001421">
    <property type="component" value="Chromosome"/>
</dbReference>
<dbReference type="GO" id="GO:0050566">
    <property type="term" value="F:asparaginyl-tRNA synthase (glutamine-hydrolyzing) activity"/>
    <property type="evidence" value="ECO:0007669"/>
    <property type="project" value="RHEA"/>
</dbReference>
<dbReference type="GO" id="GO:0005524">
    <property type="term" value="F:ATP binding"/>
    <property type="evidence" value="ECO:0007669"/>
    <property type="project" value="UniProtKB-KW"/>
</dbReference>
<dbReference type="GO" id="GO:0050567">
    <property type="term" value="F:glutaminyl-tRNA synthase (glutamine-hydrolyzing) activity"/>
    <property type="evidence" value="ECO:0007669"/>
    <property type="project" value="UniProtKB-UniRule"/>
</dbReference>
<dbReference type="GO" id="GO:0070681">
    <property type="term" value="P:glutaminyl-tRNAGln biosynthesis via transamidation"/>
    <property type="evidence" value="ECO:0007669"/>
    <property type="project" value="TreeGrafter"/>
</dbReference>
<dbReference type="GO" id="GO:0006450">
    <property type="term" value="P:regulation of translational fidelity"/>
    <property type="evidence" value="ECO:0007669"/>
    <property type="project" value="InterPro"/>
</dbReference>
<dbReference type="GO" id="GO:0006412">
    <property type="term" value="P:translation"/>
    <property type="evidence" value="ECO:0007669"/>
    <property type="project" value="UniProtKB-UniRule"/>
</dbReference>
<dbReference type="Gene3D" id="1.10.20.60">
    <property type="entry name" value="Glu-tRNAGln amidotransferase C subunit, N-terminal domain"/>
    <property type="match status" value="1"/>
</dbReference>
<dbReference type="HAMAP" id="MF_00122">
    <property type="entry name" value="GatC"/>
    <property type="match status" value="1"/>
</dbReference>
<dbReference type="InterPro" id="IPR036113">
    <property type="entry name" value="Asp/Glu-ADT_sf_sub_c"/>
</dbReference>
<dbReference type="InterPro" id="IPR003837">
    <property type="entry name" value="GatC"/>
</dbReference>
<dbReference type="NCBIfam" id="TIGR00135">
    <property type="entry name" value="gatC"/>
    <property type="match status" value="1"/>
</dbReference>
<dbReference type="PANTHER" id="PTHR15004">
    <property type="entry name" value="GLUTAMYL-TRNA(GLN) AMIDOTRANSFERASE SUBUNIT C, MITOCHONDRIAL"/>
    <property type="match status" value="1"/>
</dbReference>
<dbReference type="PANTHER" id="PTHR15004:SF0">
    <property type="entry name" value="GLUTAMYL-TRNA(GLN) AMIDOTRANSFERASE SUBUNIT C, MITOCHONDRIAL"/>
    <property type="match status" value="1"/>
</dbReference>
<dbReference type="Pfam" id="PF02686">
    <property type="entry name" value="GatC"/>
    <property type="match status" value="1"/>
</dbReference>
<dbReference type="SUPFAM" id="SSF141000">
    <property type="entry name" value="Glu-tRNAGln amidotransferase C subunit"/>
    <property type="match status" value="1"/>
</dbReference>
<comment type="function">
    <text evidence="1">Allows the formation of correctly charged Asn-tRNA(Asn) or Gln-tRNA(Gln) through the transamidation of misacylated Asp-tRNA(Asn) or Glu-tRNA(Gln) in organisms which lack either or both of asparaginyl-tRNA or glutaminyl-tRNA synthetases. The reaction takes place in the presence of glutamine and ATP through an activated phospho-Asp-tRNA(Asn) or phospho-Glu-tRNA(Gln).</text>
</comment>
<comment type="catalytic activity">
    <reaction evidence="1">
        <text>L-glutamyl-tRNA(Gln) + L-glutamine + ATP + H2O = L-glutaminyl-tRNA(Gln) + L-glutamate + ADP + phosphate + H(+)</text>
        <dbReference type="Rhea" id="RHEA:17521"/>
        <dbReference type="Rhea" id="RHEA-COMP:9681"/>
        <dbReference type="Rhea" id="RHEA-COMP:9684"/>
        <dbReference type="ChEBI" id="CHEBI:15377"/>
        <dbReference type="ChEBI" id="CHEBI:15378"/>
        <dbReference type="ChEBI" id="CHEBI:29985"/>
        <dbReference type="ChEBI" id="CHEBI:30616"/>
        <dbReference type="ChEBI" id="CHEBI:43474"/>
        <dbReference type="ChEBI" id="CHEBI:58359"/>
        <dbReference type="ChEBI" id="CHEBI:78520"/>
        <dbReference type="ChEBI" id="CHEBI:78521"/>
        <dbReference type="ChEBI" id="CHEBI:456216"/>
    </reaction>
</comment>
<comment type="catalytic activity">
    <reaction evidence="1">
        <text>L-aspartyl-tRNA(Asn) + L-glutamine + ATP + H2O = L-asparaginyl-tRNA(Asn) + L-glutamate + ADP + phosphate + 2 H(+)</text>
        <dbReference type="Rhea" id="RHEA:14513"/>
        <dbReference type="Rhea" id="RHEA-COMP:9674"/>
        <dbReference type="Rhea" id="RHEA-COMP:9677"/>
        <dbReference type="ChEBI" id="CHEBI:15377"/>
        <dbReference type="ChEBI" id="CHEBI:15378"/>
        <dbReference type="ChEBI" id="CHEBI:29985"/>
        <dbReference type="ChEBI" id="CHEBI:30616"/>
        <dbReference type="ChEBI" id="CHEBI:43474"/>
        <dbReference type="ChEBI" id="CHEBI:58359"/>
        <dbReference type="ChEBI" id="CHEBI:78515"/>
        <dbReference type="ChEBI" id="CHEBI:78516"/>
        <dbReference type="ChEBI" id="CHEBI:456216"/>
    </reaction>
</comment>
<comment type="subunit">
    <text evidence="1">Heterotrimer of A, B and C subunits.</text>
</comment>
<comment type="similarity">
    <text evidence="1">Belongs to the GatC family.</text>
</comment>
<comment type="sequence caution" evidence="2">
    <conflict type="erroneous initiation">
        <sequence resource="EMBL-CDS" id="CAE39340"/>
    </conflict>
</comment>